<protein>
    <recommendedName>
        <fullName evidence="3">1,2-beta-oligoglucan phosphorylase</fullName>
        <ecNumber evidence="2">2.4.1.333</ecNumber>
    </recommendedName>
</protein>
<feature type="chain" id="PRO_0000432711" description="1,2-beta-oligoglucan phosphorylase">
    <location>
        <begin position="1"/>
        <end position="1086"/>
    </location>
</feature>
<feature type="active site" description="Proton donor" evidence="1">
    <location>
        <position position="741"/>
    </location>
</feature>
<name>12OLP_LISIN</name>
<sequence>MTMLKEIKKADLSAAFYPSGELAWLKLKDIMLNQVIQNPLENRLSQIYVRAHVGDKIEIYPLLSRDAEVGFNENGVEYRGVVGPFRYSVQMHFHTRGWFYDVTVDGDLEFDLVYLQDLGLAEQAAVRTNEAYMSQYIDYHVTEGATGFTVQARQNQPQNERFPAVQIGALTKIVGYATDGFDIYGTNYKLTSELANLKEKSLPSRVYQYEFAQISLQTELFTNHGETIFYGYATENQPKASGAPFENLAELKSNISEQPYQPSTKAILNKHIGTPITGETISDSWLQENFPDRIQEEQQNGALLSFFTPNYAHVVMREKEAELERPHGSILLDKVDVLNPEATLSATTYMYGAFLSQLVAGNTNMNKWNSHARNPLNILQTSGLRIYIELDSELRLLGVPSVWETSTNYSTWYYQWNGDLITVQTTLTADSKEAFVTVHSEKGHSYKLVLTNQVTMGTNEYDTTVKKEIKDGIVTYFPAEDSPILETYPALQFRVDGTYNELTDERYFAKDYVGTAGLDVFVFEPSDKATFHVQAKLSDEFSKPTEDLEANNKVIRASYDELTAQFHLNHQSTTAEKLNLTVYWYAHQMLVHYASPHGLEQYSGAAWGTRDVSQGPFEFFLATGNKAVLRKLVLTIFSHQYQDTGDWPQWFMFDKYTSIQQEESHGDVIVWPLKIIGDYLEMSGDAGILEEAIPFVDRESKTFTKEQGTLLEHIELAVKTIEARFMKGTALSNYGDGDWDDTLQPANAQLKKNMVSSWTVALTYQTFKRLAAFLPVGEKYETLAKNVQADFAKYMTNDTDVIPGFLYLEEGKAPVWMIHPEDKETNIKYRLIPLTRSVISELVDKKQASRNFEIIGEHLLHPDGVRLMSEPAHYAGGVSTHFKRAEQAANFGREVGLQYVHAHIRYIEALAKIGDKSAWHMLDVINPINIKEVVPNAALRQSNTYFSSSDAAFLDRYQAQNEFGRVKEGSIPVKGGWRIYSSGPGIYLHQLISSVLGIRQTEDALIFDPILPEELDGLECHIELDNYPLDLTFESADEGSIVVNGEKQPVENGANLYRTGALILPKKNLTTKCSQITIKFQKNNRL</sequence>
<proteinExistence type="evidence at protein level"/>
<comment type="function">
    <text evidence="2">Catalyzes the reversible phosphorolysis of beta-(1-&gt;2)-D-glucans. The minimum length of the substrate for the phosphorolytic reaction is 3 D-glucose units.</text>
</comment>
<comment type="catalytic activity">
    <reaction evidence="2">
        <text>[(1-&gt;2)-beta-D-glucosyl](n) + phosphate = [(1-&gt;2)-beta-D-glucosyl](n-1) + alpha-D-glucose 1-phosphate</text>
        <dbReference type="Rhea" id="RHEA:47684"/>
        <dbReference type="Rhea" id="RHEA-COMP:11881"/>
        <dbReference type="Rhea" id="RHEA-COMP:11882"/>
        <dbReference type="ChEBI" id="CHEBI:27517"/>
        <dbReference type="ChEBI" id="CHEBI:43474"/>
        <dbReference type="ChEBI" id="CHEBI:58601"/>
        <dbReference type="EC" id="2.4.1.333"/>
    </reaction>
</comment>
<comment type="biophysicochemical properties">
    <kinetics>
        <KM evidence="2">8.5 mM for (beta-(1-&gt;2)-D-glucans) x 2 units in the synthetic reaction</KM>
        <KM evidence="2">6 mM for (beta-(1-&gt;2)-D-glucans) x 3 units in the synthetic reaction</KM>
        <KM evidence="2">6.8 mM for (beta-(1-&gt;2)-D-glucans) x 4 units in the synthetic reaction</KM>
        <KM evidence="2">1.2 mM for alpha-D-glucose 1-phosphate in the synthetic reaction</KM>
        <KM evidence="2">1 mM for (beta-(1-&gt;2)-D-glucans) x 3 units in the phosphorolytic reaction</KM>
        <KM evidence="2">1.2 mM for (beta-(1-&gt;2)-D-glucans) x 4 units in the phosphorolytic reaction</KM>
        <KM evidence="2">1.8 mM for (beta-(1-&gt;2)-D-glucans) x 5 units in the phosphorolytic reaction</KM>
        <text evidence="2">kcat is 97 sec(-1) for (beta-(1-&gt;2)-D-glucans) x 2 units in the synthetic reaction. kcat is 110 sec(-1) for (beta-(1-&gt;2)-D-glucans) x 3 units in the synthetic reaction. kcat is 90 sec(-1) for (beta-(1-&gt;2)-D-glucans) x 4 units in the synthetic reaction. kcat is 43 sec(-1) for alpha-D-glucose 1-phosphate in the synthetic reaction. kcat is 19 sec(-1) for (beta-(1-&gt;2)-D-glucans) x 3 units in the phosphorolytic reaction. kcat is 30 sec(-1) for (beta-(1-&gt;2)-D-glucans) x 4 units in the phosphorolytic reaction. kcat is 31 sec(-1) for (beta-(1-&gt;2)-D-glucans) x 5 units in the phosphorolytic reaction.</text>
    </kinetics>
    <phDependence>
        <text evidence="2">Optimum pH is 7.5-8.0.</text>
    </phDependence>
    <temperatureDependence>
        <text evidence="2">Optimum temperature is 37-45 degrees Celsius.</text>
    </temperatureDependence>
</comment>
<comment type="subunit">
    <text evidence="4">Monomer.</text>
</comment>
<comment type="similarity">
    <text evidence="3">Belongs to the glycosyl hydrolase 94 family.</text>
</comment>
<keyword id="KW-0328">Glycosyltransferase</keyword>
<keyword id="KW-0808">Transferase</keyword>
<accession>Q92AT0</accession>
<evidence type="ECO:0000250" key="1">
    <source>
        <dbReference type="UniProtKB" id="Q76IQ9"/>
    </source>
</evidence>
<evidence type="ECO:0000269" key="2">
    <source>
    </source>
</evidence>
<evidence type="ECO:0000305" key="3"/>
<evidence type="ECO:0000305" key="4">
    <source>
    </source>
</evidence>
<evidence type="ECO:0000312" key="5">
    <source>
        <dbReference type="EMBL" id="CAC97070.1"/>
    </source>
</evidence>
<evidence type="ECO:0000312" key="6">
    <source>
        <dbReference type="Proteomes" id="UP000002513"/>
    </source>
</evidence>
<gene>
    <name evidence="5" type="ordered locus">lin1839</name>
</gene>
<organism>
    <name type="scientific">Listeria innocua serovar 6a (strain ATCC BAA-680 / CLIP 11262)</name>
    <dbReference type="NCBI Taxonomy" id="272626"/>
    <lineage>
        <taxon>Bacteria</taxon>
        <taxon>Bacillati</taxon>
        <taxon>Bacillota</taxon>
        <taxon>Bacilli</taxon>
        <taxon>Bacillales</taxon>
        <taxon>Listeriaceae</taxon>
        <taxon>Listeria</taxon>
    </lineage>
</organism>
<dbReference type="EC" id="2.4.1.333" evidence="2"/>
<dbReference type="EMBL" id="AL596170">
    <property type="protein sequence ID" value="CAC97070.1"/>
    <property type="molecule type" value="Genomic_DNA"/>
</dbReference>
<dbReference type="PIR" id="AF1662">
    <property type="entry name" value="AF1662"/>
</dbReference>
<dbReference type="RefSeq" id="WP_010990982.1">
    <property type="nucleotide sequence ID" value="NC_003212.1"/>
</dbReference>
<dbReference type="SMR" id="Q92AT0"/>
<dbReference type="STRING" id="272626.gene:17566195"/>
<dbReference type="CAZy" id="GH94">
    <property type="family name" value="Glycoside Hydrolase Family 94"/>
</dbReference>
<dbReference type="KEGG" id="lin:lin1839"/>
<dbReference type="eggNOG" id="COG3459">
    <property type="taxonomic scope" value="Bacteria"/>
</dbReference>
<dbReference type="HOGENOM" id="CLU_009079_0_0_9"/>
<dbReference type="OrthoDB" id="9769991at2"/>
<dbReference type="BRENDA" id="2.4.1.333">
    <property type="organism ID" value="3044"/>
</dbReference>
<dbReference type="Proteomes" id="UP000002513">
    <property type="component" value="Chromosome"/>
</dbReference>
<dbReference type="GO" id="GO:0016757">
    <property type="term" value="F:glycosyltransferase activity"/>
    <property type="evidence" value="ECO:0007669"/>
    <property type="project" value="UniProtKB-KW"/>
</dbReference>
<dbReference type="GO" id="GO:0005975">
    <property type="term" value="P:carbohydrate metabolic process"/>
    <property type="evidence" value="ECO:0007669"/>
    <property type="project" value="InterPro"/>
</dbReference>
<dbReference type="Gene3D" id="1.50.10.10">
    <property type="match status" value="1"/>
</dbReference>
<dbReference type="InterPro" id="IPR008928">
    <property type="entry name" value="6-hairpin_glycosidase_sf"/>
</dbReference>
<dbReference type="InterPro" id="IPR012341">
    <property type="entry name" value="6hp_glycosidase-like_sf"/>
</dbReference>
<dbReference type="InterPro" id="IPR033432">
    <property type="entry name" value="GH36_catalytic"/>
</dbReference>
<dbReference type="InterPro" id="IPR052047">
    <property type="entry name" value="GH94_Enzymes"/>
</dbReference>
<dbReference type="InterPro" id="IPR048771">
    <property type="entry name" value="SOGP_2nd"/>
</dbReference>
<dbReference type="InterPro" id="IPR048773">
    <property type="entry name" value="SOGP_C"/>
</dbReference>
<dbReference type="InterPro" id="IPR053831">
    <property type="entry name" value="SOGP_N"/>
</dbReference>
<dbReference type="PANTHER" id="PTHR37469:SF2">
    <property type="entry name" value="CELLOBIONIC ACID PHOSPHORYLASE"/>
    <property type="match status" value="1"/>
</dbReference>
<dbReference type="PANTHER" id="PTHR37469">
    <property type="entry name" value="CELLOBIONIC ACID PHOSPHORYLASE-RELATED"/>
    <property type="match status" value="1"/>
</dbReference>
<dbReference type="Pfam" id="PF17167">
    <property type="entry name" value="Glyco_hydro_36"/>
    <property type="match status" value="1"/>
</dbReference>
<dbReference type="Pfam" id="PF21250">
    <property type="entry name" value="SOGP_2nd"/>
    <property type="match status" value="1"/>
</dbReference>
<dbReference type="Pfam" id="PF21270">
    <property type="entry name" value="SOGP_4th"/>
    <property type="match status" value="1"/>
</dbReference>
<dbReference type="Pfam" id="PF21958">
    <property type="entry name" value="SOGP_N"/>
    <property type="match status" value="1"/>
</dbReference>
<dbReference type="SUPFAM" id="SSF48208">
    <property type="entry name" value="Six-hairpin glycosidases"/>
    <property type="match status" value="1"/>
</dbReference>
<reference key="1">
    <citation type="journal article" date="2001" name="Science">
        <title>Comparative genomics of Listeria species.</title>
        <authorList>
            <person name="Glaser P."/>
            <person name="Frangeul L."/>
            <person name="Buchrieser C."/>
            <person name="Rusniok C."/>
            <person name="Amend A."/>
            <person name="Baquero F."/>
            <person name="Berche P."/>
            <person name="Bloecker H."/>
            <person name="Brandt P."/>
            <person name="Chakraborty T."/>
            <person name="Charbit A."/>
            <person name="Chetouani F."/>
            <person name="Couve E."/>
            <person name="de Daruvar A."/>
            <person name="Dehoux P."/>
            <person name="Domann E."/>
            <person name="Dominguez-Bernal G."/>
            <person name="Duchaud E."/>
            <person name="Durant L."/>
            <person name="Dussurget O."/>
            <person name="Entian K.-D."/>
            <person name="Fsihi H."/>
            <person name="Garcia-del Portillo F."/>
            <person name="Garrido P."/>
            <person name="Gautier L."/>
            <person name="Goebel W."/>
            <person name="Gomez-Lopez N."/>
            <person name="Hain T."/>
            <person name="Hauf J."/>
            <person name="Jackson D."/>
            <person name="Jones L.-M."/>
            <person name="Kaerst U."/>
            <person name="Kreft J."/>
            <person name="Kuhn M."/>
            <person name="Kunst F."/>
            <person name="Kurapkat G."/>
            <person name="Madueno E."/>
            <person name="Maitournam A."/>
            <person name="Mata Vicente J."/>
            <person name="Ng E."/>
            <person name="Nedjari H."/>
            <person name="Nordsiek G."/>
            <person name="Novella S."/>
            <person name="de Pablos B."/>
            <person name="Perez-Diaz J.-C."/>
            <person name="Purcell R."/>
            <person name="Remmel B."/>
            <person name="Rose M."/>
            <person name="Schlueter T."/>
            <person name="Simoes N."/>
            <person name="Tierrez A."/>
            <person name="Vazquez-Boland J.-A."/>
            <person name="Voss H."/>
            <person name="Wehland J."/>
            <person name="Cossart P."/>
        </authorList>
    </citation>
    <scope>NUCLEOTIDE SEQUENCE [LARGE SCALE GENOMIC DNA]</scope>
    <source>
        <strain evidence="6">ATCC BAA-680 / CLIP 11262</strain>
    </source>
</reference>
<reference key="2">
    <citation type="journal article" date="2014" name="PLoS ONE">
        <title>1,2-beta-Oligoglucan phosphorylase from Listeria innocua.</title>
        <authorList>
            <person name="Nakajima M."/>
            <person name="Toyoizumi H."/>
            <person name="Abe K."/>
            <person name="Nakai H."/>
            <person name="Taguchi H."/>
            <person name="Kitaoka M."/>
        </authorList>
    </citation>
    <scope>FUNCTION</scope>
    <scope>CATALYTIC ACTIVITY</scope>
    <scope>SUBUNIT</scope>
    <scope>BIOPHYSICOCHEMICAL PROPERTIES</scope>
</reference>